<gene>
    <name evidence="1" type="primary">rpsS</name>
    <name type="ordered locus">SH0806</name>
</gene>
<feature type="chain" id="PRO_0000129907" description="Small ribosomal subunit protein uS19">
    <location>
        <begin position="1"/>
        <end position="92"/>
    </location>
</feature>
<protein>
    <recommendedName>
        <fullName evidence="1">Small ribosomal subunit protein uS19</fullName>
    </recommendedName>
    <alternativeName>
        <fullName evidence="2">30S ribosomal protein S19</fullName>
    </alternativeName>
</protein>
<accession>Q4L8B0</accession>
<proteinExistence type="inferred from homology"/>
<dbReference type="EMBL" id="AP006716">
    <property type="protein sequence ID" value="BAE04115.1"/>
    <property type="molecule type" value="Genomic_DNA"/>
</dbReference>
<dbReference type="RefSeq" id="WP_001829710.1">
    <property type="nucleotide sequence ID" value="NC_007168.1"/>
</dbReference>
<dbReference type="SMR" id="Q4L8B0"/>
<dbReference type="GeneID" id="93780195"/>
<dbReference type="KEGG" id="sha:SH0806"/>
<dbReference type="eggNOG" id="COG0185">
    <property type="taxonomic scope" value="Bacteria"/>
</dbReference>
<dbReference type="HOGENOM" id="CLU_144911_0_1_9"/>
<dbReference type="OrthoDB" id="9797833at2"/>
<dbReference type="Proteomes" id="UP000000543">
    <property type="component" value="Chromosome"/>
</dbReference>
<dbReference type="GO" id="GO:0005737">
    <property type="term" value="C:cytoplasm"/>
    <property type="evidence" value="ECO:0007669"/>
    <property type="project" value="UniProtKB-ARBA"/>
</dbReference>
<dbReference type="GO" id="GO:0015935">
    <property type="term" value="C:small ribosomal subunit"/>
    <property type="evidence" value="ECO:0007669"/>
    <property type="project" value="InterPro"/>
</dbReference>
<dbReference type="GO" id="GO:0019843">
    <property type="term" value="F:rRNA binding"/>
    <property type="evidence" value="ECO:0007669"/>
    <property type="project" value="UniProtKB-UniRule"/>
</dbReference>
<dbReference type="GO" id="GO:0003735">
    <property type="term" value="F:structural constituent of ribosome"/>
    <property type="evidence" value="ECO:0007669"/>
    <property type="project" value="InterPro"/>
</dbReference>
<dbReference type="GO" id="GO:0000028">
    <property type="term" value="P:ribosomal small subunit assembly"/>
    <property type="evidence" value="ECO:0007669"/>
    <property type="project" value="TreeGrafter"/>
</dbReference>
<dbReference type="GO" id="GO:0006412">
    <property type="term" value="P:translation"/>
    <property type="evidence" value="ECO:0007669"/>
    <property type="project" value="UniProtKB-UniRule"/>
</dbReference>
<dbReference type="FunFam" id="3.30.860.10:FF:000001">
    <property type="entry name" value="30S ribosomal protein S19"/>
    <property type="match status" value="1"/>
</dbReference>
<dbReference type="Gene3D" id="3.30.860.10">
    <property type="entry name" value="30s Ribosomal Protein S19, Chain A"/>
    <property type="match status" value="1"/>
</dbReference>
<dbReference type="HAMAP" id="MF_00531">
    <property type="entry name" value="Ribosomal_uS19"/>
    <property type="match status" value="1"/>
</dbReference>
<dbReference type="InterPro" id="IPR002222">
    <property type="entry name" value="Ribosomal_uS19"/>
</dbReference>
<dbReference type="InterPro" id="IPR005732">
    <property type="entry name" value="Ribosomal_uS19_bac-type"/>
</dbReference>
<dbReference type="InterPro" id="IPR020934">
    <property type="entry name" value="Ribosomal_uS19_CS"/>
</dbReference>
<dbReference type="InterPro" id="IPR023575">
    <property type="entry name" value="Ribosomal_uS19_SF"/>
</dbReference>
<dbReference type="NCBIfam" id="TIGR01050">
    <property type="entry name" value="rpsS_bact"/>
    <property type="match status" value="1"/>
</dbReference>
<dbReference type="PANTHER" id="PTHR11880">
    <property type="entry name" value="RIBOSOMAL PROTEIN S19P FAMILY MEMBER"/>
    <property type="match status" value="1"/>
</dbReference>
<dbReference type="PANTHER" id="PTHR11880:SF8">
    <property type="entry name" value="SMALL RIBOSOMAL SUBUNIT PROTEIN US19M"/>
    <property type="match status" value="1"/>
</dbReference>
<dbReference type="Pfam" id="PF00203">
    <property type="entry name" value="Ribosomal_S19"/>
    <property type="match status" value="1"/>
</dbReference>
<dbReference type="PIRSF" id="PIRSF002144">
    <property type="entry name" value="Ribosomal_S19"/>
    <property type="match status" value="1"/>
</dbReference>
<dbReference type="PRINTS" id="PR00975">
    <property type="entry name" value="RIBOSOMALS19"/>
</dbReference>
<dbReference type="SUPFAM" id="SSF54570">
    <property type="entry name" value="Ribosomal protein S19"/>
    <property type="match status" value="1"/>
</dbReference>
<dbReference type="PROSITE" id="PS00323">
    <property type="entry name" value="RIBOSOMAL_S19"/>
    <property type="match status" value="1"/>
</dbReference>
<comment type="function">
    <text evidence="1">Protein S19 forms a complex with S13 that binds strongly to the 16S ribosomal RNA.</text>
</comment>
<comment type="similarity">
    <text evidence="1">Belongs to the universal ribosomal protein uS19 family.</text>
</comment>
<sequence>MARSIKKGPFVDDHLMKKVEAQDGSEKKQVIKTWSRRSTIFPNFIGHTFAVYDGRKHVPVYVTEDMVGHKLGEFAPTRTFKGHAADDKKTRR</sequence>
<keyword id="KW-0687">Ribonucleoprotein</keyword>
<keyword id="KW-0689">Ribosomal protein</keyword>
<keyword id="KW-0694">RNA-binding</keyword>
<keyword id="KW-0699">rRNA-binding</keyword>
<reference key="1">
    <citation type="journal article" date="2005" name="J. Bacteriol.">
        <title>Whole-genome sequencing of Staphylococcus haemolyticus uncovers the extreme plasticity of its genome and the evolution of human-colonizing staphylococcal species.</title>
        <authorList>
            <person name="Takeuchi F."/>
            <person name="Watanabe S."/>
            <person name="Baba T."/>
            <person name="Yuzawa H."/>
            <person name="Ito T."/>
            <person name="Morimoto Y."/>
            <person name="Kuroda M."/>
            <person name="Cui L."/>
            <person name="Takahashi M."/>
            <person name="Ankai A."/>
            <person name="Baba S."/>
            <person name="Fukui S."/>
            <person name="Lee J.C."/>
            <person name="Hiramatsu K."/>
        </authorList>
    </citation>
    <scope>NUCLEOTIDE SEQUENCE [LARGE SCALE GENOMIC DNA]</scope>
    <source>
        <strain>JCSC1435</strain>
    </source>
</reference>
<organism>
    <name type="scientific">Staphylococcus haemolyticus (strain JCSC1435)</name>
    <dbReference type="NCBI Taxonomy" id="279808"/>
    <lineage>
        <taxon>Bacteria</taxon>
        <taxon>Bacillati</taxon>
        <taxon>Bacillota</taxon>
        <taxon>Bacilli</taxon>
        <taxon>Bacillales</taxon>
        <taxon>Staphylococcaceae</taxon>
        <taxon>Staphylococcus</taxon>
    </lineage>
</organism>
<evidence type="ECO:0000255" key="1">
    <source>
        <dbReference type="HAMAP-Rule" id="MF_00531"/>
    </source>
</evidence>
<evidence type="ECO:0000305" key="2"/>
<name>RS19_STAHJ</name>